<sequence>MDLLIALLPALFWGSVVLINVLVGGGPYNQIRGTTFGALIIGIILLLTGNAKFDDLTIIIVGLISGAFWALGQGYQLKSVSLIGVSKTMPISTGLQLVGTTLFSAIFLGEWSTGVQVTLGLVAMVLLVIGIALTSIKGKNEASESSKNFGKAMPILLISTVGYVVYVVVAQIFGVDGMNALFFQSIGMAIGGLILSAKHETSVKSTLWNLIPGIVWGIGNLFMFYSQPKVGVATSFSFSQLLVIVSTLGGIFLLGEKKDKRQMIGIWAGIVLIVIAPLYSEILKHNYN</sequence>
<gene>
    <name type="primary">glcU</name>
</gene>
<organism>
    <name type="scientific">Staphylococcus xylosus</name>
    <dbReference type="NCBI Taxonomy" id="1288"/>
    <lineage>
        <taxon>Bacteria</taxon>
        <taxon>Bacillati</taxon>
        <taxon>Bacillota</taxon>
        <taxon>Bacilli</taxon>
        <taxon>Bacillales</taxon>
        <taxon>Staphylococcaceae</taxon>
        <taxon>Staphylococcus</taxon>
    </lineage>
</organism>
<feature type="chain" id="PRO_0000213632" description="Glucose uptake protein GlcU">
    <location>
        <begin position="1"/>
        <end position="288"/>
    </location>
</feature>
<feature type="transmembrane region" description="Helical" evidence="1">
    <location>
        <begin position="4"/>
        <end position="26"/>
    </location>
</feature>
<feature type="transmembrane region" description="Helical" evidence="1">
    <location>
        <begin position="33"/>
        <end position="51"/>
    </location>
</feature>
<feature type="transmembrane region" description="Helical" evidence="1">
    <location>
        <begin position="56"/>
        <end position="75"/>
    </location>
</feature>
<feature type="transmembrane region" description="Helical" evidence="1">
    <location>
        <begin position="82"/>
        <end position="104"/>
    </location>
</feature>
<feature type="transmembrane region" description="Helical" evidence="1">
    <location>
        <begin position="114"/>
        <end position="136"/>
    </location>
</feature>
<feature type="transmembrane region" description="Helical" evidence="1">
    <location>
        <begin position="148"/>
        <end position="170"/>
    </location>
</feature>
<feature type="transmembrane region" description="Helical" evidence="1">
    <location>
        <begin position="180"/>
        <end position="197"/>
    </location>
</feature>
<feature type="transmembrane region" description="Helical" evidence="1">
    <location>
        <begin position="206"/>
        <end position="225"/>
    </location>
</feature>
<feature type="transmembrane region" description="Helical" evidence="1">
    <location>
        <begin position="230"/>
        <end position="252"/>
    </location>
</feature>
<feature type="transmembrane region" description="Helical" evidence="1">
    <location>
        <begin position="264"/>
        <end position="283"/>
    </location>
</feature>
<comment type="function">
    <text evidence="2">Involved in the uptake of glucose.</text>
</comment>
<comment type="subcellular location">
    <subcellularLocation>
        <location evidence="3">Cell membrane</location>
        <topology evidence="3">Multi-pass membrane protein</topology>
    </subcellularLocation>
</comment>
<comment type="similarity">
    <text evidence="3">Belongs to the GRP transporter (TC 2.A.7.5) family.</text>
</comment>
<proteinExistence type="inferred from homology"/>
<name>GLCU_STAXY</name>
<protein>
    <recommendedName>
        <fullName>Glucose uptake protein GlcU</fullName>
    </recommendedName>
</protein>
<reference key="1">
    <citation type="journal article" date="1999" name="J. Bacteriol.">
        <title>Identification of a gene in Staphylococcus xylosus encoding a novel glucose uptake protein.</title>
        <authorList>
            <person name="Fiegler H."/>
            <person name="Bassias J."/>
            <person name="Jankovic I."/>
            <person name="Brueckner R."/>
        </authorList>
    </citation>
    <scope>NUCLEOTIDE SEQUENCE [GENOMIC DNA]</scope>
    <scope>FUNCTION</scope>
    <source>
        <strain>DSM 20267 / Isolate C2A</strain>
    </source>
</reference>
<accession>O07881</accession>
<keyword id="KW-1003">Cell membrane</keyword>
<keyword id="KW-0472">Membrane</keyword>
<keyword id="KW-0762">Sugar transport</keyword>
<keyword id="KW-0812">Transmembrane</keyword>
<keyword id="KW-1133">Transmembrane helix</keyword>
<keyword id="KW-0813">Transport</keyword>
<evidence type="ECO:0000255" key="1"/>
<evidence type="ECO:0000269" key="2">
    <source>
    </source>
</evidence>
<evidence type="ECO:0000305" key="3"/>
<dbReference type="EMBL" id="Y14043">
    <property type="protein sequence ID" value="CAA74370.1"/>
    <property type="molecule type" value="Genomic_DNA"/>
</dbReference>
<dbReference type="SMR" id="O07881"/>
<dbReference type="STRING" id="1288.AWC37_08615"/>
<dbReference type="TCDB" id="2.A.7.5.1">
    <property type="family name" value="the drug/metabolite transporter (dmt) superfamily"/>
</dbReference>
<dbReference type="eggNOG" id="COG4975">
    <property type="taxonomic scope" value="Bacteria"/>
</dbReference>
<dbReference type="GO" id="GO:0005886">
    <property type="term" value="C:plasma membrane"/>
    <property type="evidence" value="ECO:0007669"/>
    <property type="project" value="UniProtKB-SubCell"/>
</dbReference>
<dbReference type="GO" id="GO:0015144">
    <property type="term" value="F:carbohydrate transmembrane transporter activity"/>
    <property type="evidence" value="ECO:0007669"/>
    <property type="project" value="InterPro"/>
</dbReference>
<dbReference type="InterPro" id="IPR010651">
    <property type="entry name" value="Sugar_transport"/>
</dbReference>
<dbReference type="NCBIfam" id="TIGR00776">
    <property type="entry name" value="RhaT"/>
    <property type="match status" value="1"/>
</dbReference>
<dbReference type="PANTHER" id="PTHR16119">
    <property type="entry name" value="TRANSMEMBRANE PROTEIN 144"/>
    <property type="match status" value="1"/>
</dbReference>
<dbReference type="PANTHER" id="PTHR16119:SF17">
    <property type="entry name" value="TRANSMEMBRANE PROTEIN 144"/>
    <property type="match status" value="1"/>
</dbReference>
<dbReference type="Pfam" id="PF06800">
    <property type="entry name" value="Sugar_transport"/>
    <property type="match status" value="1"/>
</dbReference>
<dbReference type="SUPFAM" id="SSF103481">
    <property type="entry name" value="Multidrug resistance efflux transporter EmrE"/>
    <property type="match status" value="2"/>
</dbReference>